<comment type="function">
    <text evidence="1">Catalyzes the phosphorylation of the position 2 hydroxy group of 4-diphosphocytidyl-2C-methyl-D-erythritol.</text>
</comment>
<comment type="catalytic activity">
    <reaction evidence="1">
        <text>4-CDP-2-C-methyl-D-erythritol + ATP = 4-CDP-2-C-methyl-D-erythritol 2-phosphate + ADP + H(+)</text>
        <dbReference type="Rhea" id="RHEA:18437"/>
        <dbReference type="ChEBI" id="CHEBI:15378"/>
        <dbReference type="ChEBI" id="CHEBI:30616"/>
        <dbReference type="ChEBI" id="CHEBI:57823"/>
        <dbReference type="ChEBI" id="CHEBI:57919"/>
        <dbReference type="ChEBI" id="CHEBI:456216"/>
        <dbReference type="EC" id="2.7.1.148"/>
    </reaction>
</comment>
<comment type="pathway">
    <text evidence="1">Isoprenoid biosynthesis; isopentenyl diphosphate biosynthesis via DXP pathway; isopentenyl diphosphate from 1-deoxy-D-xylulose 5-phosphate: step 3/6.</text>
</comment>
<comment type="similarity">
    <text evidence="1">Belongs to the GHMP kinase family. IspE subfamily.</text>
</comment>
<proteinExistence type="inferred from homology"/>
<protein>
    <recommendedName>
        <fullName evidence="1">4-diphosphocytidyl-2-C-methyl-D-erythritol kinase</fullName>
        <shortName evidence="1">CMK</shortName>
        <ecNumber evidence="1">2.7.1.148</ecNumber>
    </recommendedName>
    <alternativeName>
        <fullName evidence="1">4-(cytidine-5'-diphospho)-2-C-methyl-D-erythritol kinase</fullName>
    </alternativeName>
</protein>
<accession>A8HU60</accession>
<feature type="chain" id="PRO_0000335701" description="4-diphosphocytidyl-2-C-methyl-D-erythritol kinase">
    <location>
        <begin position="1"/>
        <end position="289"/>
    </location>
</feature>
<feature type="active site" evidence="1">
    <location>
        <position position="11"/>
    </location>
</feature>
<feature type="active site" evidence="1">
    <location>
        <position position="138"/>
    </location>
</feature>
<feature type="binding site" evidence="1">
    <location>
        <begin position="96"/>
        <end position="106"/>
    </location>
    <ligand>
        <name>ATP</name>
        <dbReference type="ChEBI" id="CHEBI:30616"/>
    </ligand>
</feature>
<gene>
    <name evidence="1" type="primary">ispE</name>
    <name type="ordered locus">AZC_0910</name>
</gene>
<organism>
    <name type="scientific">Azorhizobium caulinodans (strain ATCC 43989 / DSM 5975 / JCM 20966 / LMG 6465 / NBRC 14845 / NCIMB 13405 / ORS 571)</name>
    <dbReference type="NCBI Taxonomy" id="438753"/>
    <lineage>
        <taxon>Bacteria</taxon>
        <taxon>Pseudomonadati</taxon>
        <taxon>Pseudomonadota</taxon>
        <taxon>Alphaproteobacteria</taxon>
        <taxon>Hyphomicrobiales</taxon>
        <taxon>Xanthobacteraceae</taxon>
        <taxon>Azorhizobium</taxon>
    </lineage>
</organism>
<keyword id="KW-0067">ATP-binding</keyword>
<keyword id="KW-0414">Isoprene biosynthesis</keyword>
<keyword id="KW-0418">Kinase</keyword>
<keyword id="KW-0547">Nucleotide-binding</keyword>
<keyword id="KW-1185">Reference proteome</keyword>
<keyword id="KW-0808">Transferase</keyword>
<name>ISPE_AZOC5</name>
<evidence type="ECO:0000255" key="1">
    <source>
        <dbReference type="HAMAP-Rule" id="MF_00061"/>
    </source>
</evidence>
<sequence>MQRLVARAPAKVNLTLRILRRRPDGFHDLASIVAFAGACDVVTLESDAPLGLAVAGPSAAAAGPDADNLILRAADAFARHVPGARLGRFTLTKRLPVAAGIGGGSSDAAAALRLLAQINDIALDDPRLHAAAREVGADVPVCLDPQARIMEGIGERLSEPLGLAPLFAVLVNCRVPVPTADVFRTLGLRAGEDLAGLPHEAPMSTGRAAVMRHLVLHGNDLEPPAETVAPEITRVKAMLAQEPEVRLVRMSGSGATVFALTDDCRAAAQVARRVAAAEPGWWVRPTVLR</sequence>
<dbReference type="EC" id="2.7.1.148" evidence="1"/>
<dbReference type="EMBL" id="AP009384">
    <property type="protein sequence ID" value="BAF86908.1"/>
    <property type="molecule type" value="Genomic_DNA"/>
</dbReference>
<dbReference type="RefSeq" id="WP_012169441.1">
    <property type="nucleotide sequence ID" value="NC_009937.1"/>
</dbReference>
<dbReference type="SMR" id="A8HU60"/>
<dbReference type="STRING" id="438753.AZC_0910"/>
<dbReference type="KEGG" id="azc:AZC_0910"/>
<dbReference type="eggNOG" id="COG1947">
    <property type="taxonomic scope" value="Bacteria"/>
</dbReference>
<dbReference type="HOGENOM" id="CLU_053057_1_0_5"/>
<dbReference type="UniPathway" id="UPA00056">
    <property type="reaction ID" value="UER00094"/>
</dbReference>
<dbReference type="Proteomes" id="UP000000270">
    <property type="component" value="Chromosome"/>
</dbReference>
<dbReference type="GO" id="GO:0050515">
    <property type="term" value="F:4-(cytidine 5'-diphospho)-2-C-methyl-D-erythritol kinase activity"/>
    <property type="evidence" value="ECO:0007669"/>
    <property type="project" value="UniProtKB-UniRule"/>
</dbReference>
<dbReference type="GO" id="GO:0005524">
    <property type="term" value="F:ATP binding"/>
    <property type="evidence" value="ECO:0007669"/>
    <property type="project" value="UniProtKB-UniRule"/>
</dbReference>
<dbReference type="GO" id="GO:0019288">
    <property type="term" value="P:isopentenyl diphosphate biosynthetic process, methylerythritol 4-phosphate pathway"/>
    <property type="evidence" value="ECO:0007669"/>
    <property type="project" value="UniProtKB-UniRule"/>
</dbReference>
<dbReference type="GO" id="GO:0016114">
    <property type="term" value="P:terpenoid biosynthetic process"/>
    <property type="evidence" value="ECO:0007669"/>
    <property type="project" value="InterPro"/>
</dbReference>
<dbReference type="Gene3D" id="3.30.230.10">
    <property type="match status" value="1"/>
</dbReference>
<dbReference type="Gene3D" id="3.30.70.890">
    <property type="entry name" value="GHMP kinase, C-terminal domain"/>
    <property type="match status" value="1"/>
</dbReference>
<dbReference type="HAMAP" id="MF_00061">
    <property type="entry name" value="IspE"/>
    <property type="match status" value="1"/>
</dbReference>
<dbReference type="InterPro" id="IPR013750">
    <property type="entry name" value="GHMP_kinase_C_dom"/>
</dbReference>
<dbReference type="InterPro" id="IPR036554">
    <property type="entry name" value="GHMP_kinase_C_sf"/>
</dbReference>
<dbReference type="InterPro" id="IPR006204">
    <property type="entry name" value="GHMP_kinase_N_dom"/>
</dbReference>
<dbReference type="InterPro" id="IPR004424">
    <property type="entry name" value="IspE"/>
</dbReference>
<dbReference type="InterPro" id="IPR020568">
    <property type="entry name" value="Ribosomal_Su5_D2-typ_SF"/>
</dbReference>
<dbReference type="InterPro" id="IPR014721">
    <property type="entry name" value="Ribsml_uS5_D2-typ_fold_subgr"/>
</dbReference>
<dbReference type="NCBIfam" id="TIGR00154">
    <property type="entry name" value="ispE"/>
    <property type="match status" value="1"/>
</dbReference>
<dbReference type="NCBIfam" id="NF011202">
    <property type="entry name" value="PRK14608.1"/>
    <property type="match status" value="1"/>
</dbReference>
<dbReference type="PANTHER" id="PTHR43527">
    <property type="entry name" value="4-DIPHOSPHOCYTIDYL-2-C-METHYL-D-ERYTHRITOL KINASE, CHLOROPLASTIC"/>
    <property type="match status" value="1"/>
</dbReference>
<dbReference type="PANTHER" id="PTHR43527:SF2">
    <property type="entry name" value="4-DIPHOSPHOCYTIDYL-2-C-METHYL-D-ERYTHRITOL KINASE, CHLOROPLASTIC"/>
    <property type="match status" value="1"/>
</dbReference>
<dbReference type="Pfam" id="PF08544">
    <property type="entry name" value="GHMP_kinases_C"/>
    <property type="match status" value="1"/>
</dbReference>
<dbReference type="Pfam" id="PF00288">
    <property type="entry name" value="GHMP_kinases_N"/>
    <property type="match status" value="1"/>
</dbReference>
<dbReference type="PIRSF" id="PIRSF010376">
    <property type="entry name" value="IspE"/>
    <property type="match status" value="1"/>
</dbReference>
<dbReference type="SUPFAM" id="SSF55060">
    <property type="entry name" value="GHMP Kinase, C-terminal domain"/>
    <property type="match status" value="1"/>
</dbReference>
<dbReference type="SUPFAM" id="SSF54211">
    <property type="entry name" value="Ribosomal protein S5 domain 2-like"/>
    <property type="match status" value="1"/>
</dbReference>
<reference key="1">
    <citation type="submission" date="2007-04" db="EMBL/GenBank/DDBJ databases">
        <title>Complete genome sequence of the nitrogen-fixing bacterium Azorhizobium caulinodans ORS571.</title>
        <authorList>
            <person name="Lee K.B."/>
            <person name="Backer P.D."/>
            <person name="Aono T."/>
            <person name="Liu C.T."/>
            <person name="Suzuki S."/>
            <person name="Suzuki T."/>
            <person name="Kaneko T."/>
            <person name="Yamada M."/>
            <person name="Tabata S."/>
            <person name="Kupfer D.M."/>
            <person name="Najar F.Z."/>
            <person name="Wiley G.B."/>
            <person name="Roe B."/>
            <person name="Binnewies T."/>
            <person name="Ussery D."/>
            <person name="Vereecke D."/>
            <person name="Gevers D."/>
            <person name="Holsters M."/>
            <person name="Oyaizu H."/>
        </authorList>
    </citation>
    <scope>NUCLEOTIDE SEQUENCE [LARGE SCALE GENOMIC DNA]</scope>
    <source>
        <strain>ATCC 43989 / DSM 5975 / JCM 20966 / LMG 6465 / NBRC 14845 / NCIMB 13405 / ORS 571</strain>
    </source>
</reference>